<feature type="chain" id="PRO_0000277359" description="Uncharacterized protein ycf73">
    <location>
        <begin position="1"/>
        <end position="249"/>
    </location>
</feature>
<feature type="sequence conflict" description="In Ref. 1; CAA33921/CAA33940." evidence="1" ref="1">
    <original>Q</original>
    <variation>E</variation>
    <location>
        <position position="220"/>
    </location>
</feature>
<dbReference type="EMBL" id="X15901">
    <property type="protein sequence ID" value="CAA33921.1"/>
    <property type="molecule type" value="Genomic_DNA"/>
</dbReference>
<dbReference type="EMBL" id="X15901">
    <property type="protein sequence ID" value="CAA33940.1"/>
    <property type="molecule type" value="Genomic_DNA"/>
</dbReference>
<dbReference type="EMBL" id="AY522330">
    <property type="status" value="NOT_ANNOTATED_CDS"/>
    <property type="molecule type" value="Genomic_DNA"/>
</dbReference>
<dbReference type="PIR" id="JQ0274">
    <property type="entry name" value="JQ0274"/>
</dbReference>
<dbReference type="RefSeq" id="NP_039431.1">
    <property type="nucleotide sequence ID" value="NC_001320.1"/>
</dbReference>
<dbReference type="RefSeq" id="NP_039460.1">
    <property type="nucleotide sequence ID" value="NC_001320.1"/>
</dbReference>
<dbReference type="SMR" id="Q37066"/>
<dbReference type="FunCoup" id="Q37066">
    <property type="interactions" value="743"/>
</dbReference>
<dbReference type="PaxDb" id="39947-Q37066"/>
<dbReference type="KEGG" id="dosa:CAA33921.1"/>
<dbReference type="KEGG" id="dosa:CAA33940.1"/>
<dbReference type="KEGG" id="osa:3131479"/>
<dbReference type="KEGG" id="osa:3131495"/>
<dbReference type="InParanoid" id="Q37066"/>
<dbReference type="OrthoDB" id="630954at2759"/>
<dbReference type="Proteomes" id="UP000059680">
    <property type="component" value="Chloroplast"/>
</dbReference>
<dbReference type="GO" id="GO:0009507">
    <property type="term" value="C:chloroplast"/>
    <property type="evidence" value="ECO:0007669"/>
    <property type="project" value="UniProtKB-SubCell"/>
</dbReference>
<dbReference type="GO" id="GO:0009536">
    <property type="term" value="C:plastid"/>
    <property type="evidence" value="ECO:0000250"/>
    <property type="project" value="Gramene"/>
</dbReference>
<name>YCF73_ORYSJ</name>
<proteinExistence type="inferred from homology"/>
<reference key="1">
    <citation type="journal article" date="1989" name="Mol. Gen. Genet.">
        <title>The complete sequence of the rice (Oryza sativa) chloroplast genome: intermolecular recombination between distinct tRNA genes accounts for a major plastid DNA inversion during the evolution of the cereals.</title>
        <authorList>
            <person name="Hiratsuka J."/>
            <person name="Shimada H."/>
            <person name="Whittier R."/>
            <person name="Ishibashi T."/>
            <person name="Sakamoto M."/>
            <person name="Mori M."/>
            <person name="Kondo C."/>
            <person name="Honji Y."/>
            <person name="Sun C.-R."/>
            <person name="Meng B.-Y."/>
            <person name="Li Y.-Q."/>
            <person name="Kanno A."/>
            <person name="Nishizawa Y."/>
            <person name="Hirai A."/>
            <person name="Shinozaki K."/>
            <person name="Sugiura M."/>
        </authorList>
    </citation>
    <scope>NUCLEOTIDE SEQUENCE [LARGE SCALE GENOMIC DNA]</scope>
    <source>
        <strain>cv. Nipponbare</strain>
    </source>
</reference>
<reference key="2">
    <citation type="journal article" date="2004" name="Plant Physiol.">
        <title>A comparison of rice chloroplast genomes.</title>
        <authorList>
            <person name="Tang J."/>
            <person name="Xia H."/>
            <person name="Cao M."/>
            <person name="Zhang X."/>
            <person name="Zeng W."/>
            <person name="Hu S."/>
            <person name="Tong W."/>
            <person name="Wang J."/>
            <person name="Wang J."/>
            <person name="Yu J."/>
            <person name="Yang H."/>
            <person name="Zhu L."/>
        </authorList>
    </citation>
    <scope>NUCLEOTIDE SEQUENCE [LARGE SCALE GENOMIC DNA]</scope>
    <source>
        <strain>cv. Nipponbare</strain>
    </source>
</reference>
<evidence type="ECO:0000305" key="1"/>
<sequence>MTKDETLLVFTLVVSSVSVFLFGILLFMVLISATRDFRERTKSKLVKIMIWAGIVVITFAIAVRIYPIFIFLLKERIKPLVEALYDKLPWIWEVSLSRYWDRLIDFLDRYLWACAQRIQTGIRKQKGEFVVTFSCRVKKRLYARAIEVGIHLSLLSNLFWILKTTLAVGYRLLWVLYYIISFEGFLGSFRLYLVYFGFYCLLFSGKWLRTSEDRGERQAQISGILLRGMLIECAFSVLCLEEDSNLHAL</sequence>
<gene>
    <name type="primary">ycf73-A</name>
    <name type="ordered locus">LOC_Osp1g01070</name>
</gene>
<gene>
    <name type="primary">ycf73-B</name>
</gene>
<comment type="subcellular location">
    <subcellularLocation>
        <location>Plastid</location>
        <location>Chloroplast</location>
    </subcellularLocation>
</comment>
<comment type="similarity">
    <text evidence="1">Belongs to the ycf73 family.</text>
</comment>
<accession>Q37066</accession>
<accession>O03580</accession>
<accession>O03587</accession>
<keyword id="KW-0150">Chloroplast</keyword>
<keyword id="KW-0934">Plastid</keyword>
<keyword id="KW-1185">Reference proteome</keyword>
<protein>
    <recommendedName>
        <fullName>Uncharacterized protein ycf73</fullName>
    </recommendedName>
    <alternativeName>
        <fullName>ORF249</fullName>
    </alternativeName>
</protein>
<organism>
    <name type="scientific">Oryza sativa subsp. japonica</name>
    <name type="common">Rice</name>
    <dbReference type="NCBI Taxonomy" id="39947"/>
    <lineage>
        <taxon>Eukaryota</taxon>
        <taxon>Viridiplantae</taxon>
        <taxon>Streptophyta</taxon>
        <taxon>Embryophyta</taxon>
        <taxon>Tracheophyta</taxon>
        <taxon>Spermatophyta</taxon>
        <taxon>Magnoliopsida</taxon>
        <taxon>Liliopsida</taxon>
        <taxon>Poales</taxon>
        <taxon>Poaceae</taxon>
        <taxon>BOP clade</taxon>
        <taxon>Oryzoideae</taxon>
        <taxon>Oryzeae</taxon>
        <taxon>Oryzinae</taxon>
        <taxon>Oryza</taxon>
        <taxon>Oryza sativa</taxon>
    </lineage>
</organism>
<geneLocation type="chloroplast"/>